<protein>
    <recommendedName>
        <fullName>Putative uncharacterized protein YNR003W-A</fullName>
    </recommendedName>
</protein>
<organism>
    <name type="scientific">Saccharomyces cerevisiae (strain ATCC 204508 / S288c)</name>
    <name type="common">Baker's yeast</name>
    <dbReference type="NCBI Taxonomy" id="559292"/>
    <lineage>
        <taxon>Eukaryota</taxon>
        <taxon>Fungi</taxon>
        <taxon>Dikarya</taxon>
        <taxon>Ascomycota</taxon>
        <taxon>Saccharomycotina</taxon>
        <taxon>Saccharomycetes</taxon>
        <taxon>Saccharomycetales</taxon>
        <taxon>Saccharomycetaceae</taxon>
        <taxon>Saccharomyces</taxon>
    </lineage>
</organism>
<gene>
    <name type="ordered locus">YNR003W-A</name>
</gene>
<accession>Q8TGL7</accession>
<dbReference type="EMBL" id="AF479975">
    <property type="protein sequence ID" value="AAL79288.1"/>
    <property type="molecule type" value="Genomic_DNA"/>
</dbReference>
<dbReference type="EMBL" id="X77395">
    <property type="status" value="NOT_ANNOTATED_CDS"/>
    <property type="molecule type" value="Genomic_DNA"/>
</dbReference>
<dbReference type="EMBL" id="Z71618">
    <property type="status" value="NOT_ANNOTATED_CDS"/>
    <property type="molecule type" value="Genomic_DNA"/>
</dbReference>
<dbReference type="STRING" id="4932.YNR003W-A"/>
<dbReference type="PaxDb" id="4932-YNR003W-A"/>
<dbReference type="EnsemblFungi" id="YNR003W-A_mRNA">
    <property type="protein sequence ID" value="YNR003W-A"/>
    <property type="gene ID" value="YNR003W-A"/>
</dbReference>
<dbReference type="AGR" id="SGD:S000028705"/>
<dbReference type="SGD" id="S000028705">
    <property type="gene designation" value="YNR003W-A"/>
</dbReference>
<dbReference type="HOGENOM" id="CLU_3392578_0_0_1"/>
<comment type="miscellaneous">
    <text evidence="1">Completely overlaps RPC34.</text>
</comment>
<comment type="caution">
    <text evidence="2">Product of a dubious gene prediction unlikely to encode a functional protein. Because of that it is not part of the S.cerevisiae S288c complete/reference proteome set.</text>
</comment>
<name>YN003_YEAST</name>
<proteinExistence type="uncertain"/>
<sequence>MENSSSSSKALLPASGSPSPWFICRMLSKVTL</sequence>
<feature type="chain" id="PRO_0000299677" description="Putative uncharacterized protein YNR003W-A">
    <location>
        <begin position="1"/>
        <end position="32"/>
    </location>
</feature>
<evidence type="ECO:0000305" key="1"/>
<evidence type="ECO:0000305" key="2">
    <source>
    </source>
</evidence>
<reference key="1">
    <citation type="journal article" date="1994" name="Yeast">
        <title>Twelve open reading frames revealed in the 23.6 kb segment flanking the centromere on the Saccharomyces cerevisiae chromosome XIV right arm.</title>
        <authorList>
            <person name="Verhasselt P."/>
            <person name="Aert R."/>
            <person name="Voet M."/>
            <person name="Volckaert G."/>
        </authorList>
    </citation>
    <scope>NUCLEOTIDE SEQUENCE [GENOMIC DNA]</scope>
    <source>
        <strain>ATCC 96604 / S288c / FY1679</strain>
    </source>
</reference>
<reference key="2">
    <citation type="journal article" date="1997" name="Nature">
        <title>The nucleotide sequence of Saccharomyces cerevisiae chromosome XIV and its evolutionary implications.</title>
        <authorList>
            <person name="Philippsen P."/>
            <person name="Kleine K."/>
            <person name="Poehlmann R."/>
            <person name="Duesterhoeft A."/>
            <person name="Hamberg K."/>
            <person name="Hegemann J.H."/>
            <person name="Obermaier B."/>
            <person name="Urrestarazu L.A."/>
            <person name="Aert R."/>
            <person name="Albermann K."/>
            <person name="Altmann R."/>
            <person name="Andre B."/>
            <person name="Baladron V."/>
            <person name="Ballesta J.P.G."/>
            <person name="Becam A.-M."/>
            <person name="Beinhauer J.D."/>
            <person name="Boskovic J."/>
            <person name="Buitrago M.J."/>
            <person name="Bussereau F."/>
            <person name="Coster F."/>
            <person name="Crouzet M."/>
            <person name="D'Angelo M."/>
            <person name="Dal Pero F."/>
            <person name="De Antoni A."/>
            <person name="del Rey F."/>
            <person name="Doignon F."/>
            <person name="Domdey H."/>
            <person name="Dubois E."/>
            <person name="Fiedler T.A."/>
            <person name="Fleig U."/>
            <person name="Floeth M."/>
            <person name="Fritz C."/>
            <person name="Gaillardin C."/>
            <person name="Garcia-Cantalejo J.M."/>
            <person name="Glansdorff N."/>
            <person name="Goffeau A."/>
            <person name="Gueldener U."/>
            <person name="Herbert C.J."/>
            <person name="Heumann K."/>
            <person name="Heuss-Neitzel D."/>
            <person name="Hilbert H."/>
            <person name="Hinni K."/>
            <person name="Iraqui Houssaini I."/>
            <person name="Jacquet M."/>
            <person name="Jimenez A."/>
            <person name="Jonniaux J.-L."/>
            <person name="Karpfinger-Hartl L."/>
            <person name="Lanfranchi G."/>
            <person name="Lepingle A."/>
            <person name="Levesque H."/>
            <person name="Lyck R."/>
            <person name="Maftahi M."/>
            <person name="Mallet L."/>
            <person name="Maurer C.T.C."/>
            <person name="Messenguy F."/>
            <person name="Mewes H.-W."/>
            <person name="Moestl D."/>
            <person name="Nasr F."/>
            <person name="Nicaud J.-M."/>
            <person name="Niedenthal R.K."/>
            <person name="Pandolfo D."/>
            <person name="Pierard A."/>
            <person name="Piravandi E."/>
            <person name="Planta R.J."/>
            <person name="Pohl T.M."/>
            <person name="Purnelle B."/>
            <person name="Rebischung C."/>
            <person name="Remacha M.A."/>
            <person name="Revuelta J.L."/>
            <person name="Rinke M."/>
            <person name="Saiz J.E."/>
            <person name="Sartorello F."/>
            <person name="Scherens B."/>
            <person name="Sen-Gupta M."/>
            <person name="Soler-Mira A."/>
            <person name="Urbanus J.H.M."/>
            <person name="Valle G."/>
            <person name="Van Dyck L."/>
            <person name="Verhasselt P."/>
            <person name="Vierendeels F."/>
            <person name="Vissers S."/>
            <person name="Voet M."/>
            <person name="Volckaert G."/>
            <person name="Wach A."/>
            <person name="Wambutt R."/>
            <person name="Wedler H."/>
            <person name="Zollner A."/>
            <person name="Hani J."/>
        </authorList>
    </citation>
    <scope>NUCLEOTIDE SEQUENCE [LARGE SCALE GENOMIC DNA]</scope>
    <source>
        <strain>ATCC 204508 / S288c</strain>
    </source>
</reference>
<reference key="3">
    <citation type="journal article" date="2014" name="G3 (Bethesda)">
        <title>The reference genome sequence of Saccharomyces cerevisiae: Then and now.</title>
        <authorList>
            <person name="Engel S.R."/>
            <person name="Dietrich F.S."/>
            <person name="Fisk D.G."/>
            <person name="Binkley G."/>
            <person name="Balakrishnan R."/>
            <person name="Costanzo M.C."/>
            <person name="Dwight S.S."/>
            <person name="Hitz B.C."/>
            <person name="Karra K."/>
            <person name="Nash R.S."/>
            <person name="Weng S."/>
            <person name="Wong E.D."/>
            <person name="Lloyd P."/>
            <person name="Skrzypek M.S."/>
            <person name="Miyasato S.R."/>
            <person name="Simison M."/>
            <person name="Cherry J.M."/>
        </authorList>
    </citation>
    <scope>GENOME REANNOTATION</scope>
    <source>
        <strain>ATCC 204508 / S288c</strain>
    </source>
</reference>
<reference key="4">
    <citation type="journal article" date="2002" name="Nat. Biotechnol.">
        <title>An integrated approach for finding overlooked genes in yeast.</title>
        <authorList>
            <person name="Kumar A."/>
            <person name="Harrison P.M."/>
            <person name="Cheung K.-H."/>
            <person name="Lan N."/>
            <person name="Echols N."/>
            <person name="Bertone P."/>
            <person name="Miller P."/>
            <person name="Gerstein M.B."/>
            <person name="Snyder M."/>
        </authorList>
    </citation>
    <scope>NUCLEOTIDE SEQUENCE [GENOMIC DNA]</scope>
</reference>